<name>MUTS2_SHOC1</name>
<protein>
    <recommendedName>
        <fullName evidence="1">Endonuclease MutS2</fullName>
        <ecNumber evidence="1">3.1.-.-</ecNumber>
    </recommendedName>
    <alternativeName>
        <fullName evidence="1">Ribosome-associated protein quality control-upstream factor</fullName>
        <shortName evidence="1">RQC-upstream factor</shortName>
        <shortName evidence="1">RqcU</shortName>
        <ecNumber evidence="1">3.6.4.-</ecNumber>
    </alternativeName>
</protein>
<sequence>MERVQRVLEYNKMKQQLLEHVASSLGRQKVNELVPSTSLEEVRHLQDETAEAANVLRLKGHVPLGGISDVRPHIKRAAIGGVLSATELIEIASTLYGGKRVKQFIETIIEDGHIEVPILAGHVEQIEPLSPIEKAIKQCIDDNGYVLDSASTSLRTVRHQIRSYESGIKSKLDQLTRSSNTRKMLSDAIVTIRSDRYVLPVKQEYRGTFGGIVHDQSSSGATLFIEPAAIVTLNNQLTEAKAKEKREIERILRELSAKVAEESEQLLLNVDKLAQLDFICAKAYYAKAVKAVKPTLNDRGYLDLRQARHPLLPPDKVVPSDMAIGDQVRSLVITGPNTGGKTVTLKTIGLLTLMAQSGLFVPAAEETELAVFEHIFADIGDEQSIEQSLSTFSSHMKNIVSILNEMNENSLILFDELGAGTDPTEGAALAISILDHVYKRGALAVATTHYSELKGYAYNREGALNASVEFDVETLRPTYRLLVGVPGRSNAFAISRRLGLDERIIDQAKLQIDSDASQVEKMIASLEDSQKSAQSEWSRAEAVRREAEALKRDLEKRMASFEEMKEAALQKAEQKAEKVVAAAQENAELIISELRDLQKQGVAVKEHQLIEARKQLEEAAPKLVSKKRKQVKKQAEKAKRLPEPGDEVKVLSFNQKGTVVKKIGDNEYQVQLGIMKMAVPIDDIQLLEQERRQPEKAITTIRGNDAHVKAELDLRGERYEDAMRRVEKYIDDALLAGYHQVSIIHGKGTGALRKGVKQFVANHPRVKSARDGGMNEGGLGNTVIELK</sequence>
<reference key="1">
    <citation type="submission" date="2003-10" db="EMBL/GenBank/DDBJ databases">
        <title>The complete genome sequence of the alkaliphilic Bacillus clausii KSM-K16.</title>
        <authorList>
            <person name="Takaki Y."/>
            <person name="Kageyama Y."/>
            <person name="Shimamura S."/>
            <person name="Suzuki H."/>
            <person name="Nishi S."/>
            <person name="Hatada Y."/>
            <person name="Kawai S."/>
            <person name="Ito S."/>
            <person name="Horikoshi K."/>
        </authorList>
    </citation>
    <scope>NUCLEOTIDE SEQUENCE [LARGE SCALE GENOMIC DNA]</scope>
    <source>
        <strain>KSM-K16</strain>
    </source>
</reference>
<comment type="function">
    <text evidence="1">Endonuclease that is involved in the suppression of homologous recombination and thus may have a key role in the control of bacterial genetic diversity.</text>
</comment>
<comment type="function">
    <text evidence="1">Acts as a ribosome collision sensor, splitting the ribosome into its 2 subunits. Detects stalled/collided 70S ribosomes which it binds and splits by an ATP-hydrolysis driven conformational change. Acts upstream of the ribosome quality control system (RQC), a ribosome-associated complex that mediates the extraction of incompletely synthesized nascent chains from stalled ribosomes and their subsequent degradation. Probably generates substrates for RQC.</text>
</comment>
<comment type="subunit">
    <text evidence="1">Homodimer. Binds to stalled ribosomes, contacting rRNA.</text>
</comment>
<comment type="similarity">
    <text evidence="1">Belongs to the DNA mismatch repair MutS family. MutS2 subfamily.</text>
</comment>
<gene>
    <name evidence="1" type="primary">mutS2</name>
    <name evidence="1" type="synonym">rqcU</name>
    <name type="ordered locus">ABC2675</name>
</gene>
<organism>
    <name type="scientific">Shouchella clausii (strain KSM-K16)</name>
    <name type="common">Alkalihalobacillus clausii</name>
    <dbReference type="NCBI Taxonomy" id="66692"/>
    <lineage>
        <taxon>Bacteria</taxon>
        <taxon>Bacillati</taxon>
        <taxon>Bacillota</taxon>
        <taxon>Bacilli</taxon>
        <taxon>Bacillales</taxon>
        <taxon>Bacillaceae</taxon>
        <taxon>Shouchella</taxon>
    </lineage>
</organism>
<feature type="chain" id="PRO_1000075473" description="Endonuclease MutS2">
    <location>
        <begin position="1"/>
        <end position="787"/>
    </location>
</feature>
<feature type="domain" description="Smr" evidence="1">
    <location>
        <begin position="712"/>
        <end position="787"/>
    </location>
</feature>
<feature type="binding site" evidence="1">
    <location>
        <begin position="335"/>
        <end position="342"/>
    </location>
    <ligand>
        <name>ATP</name>
        <dbReference type="ChEBI" id="CHEBI:30616"/>
    </ligand>
</feature>
<accession>Q5WEK0</accession>
<proteinExistence type="inferred from homology"/>
<evidence type="ECO:0000255" key="1">
    <source>
        <dbReference type="HAMAP-Rule" id="MF_00092"/>
    </source>
</evidence>
<dbReference type="EC" id="3.1.-.-" evidence="1"/>
<dbReference type="EC" id="3.6.4.-" evidence="1"/>
<dbReference type="EMBL" id="AP006627">
    <property type="protein sequence ID" value="BAD65210.1"/>
    <property type="molecule type" value="Genomic_DNA"/>
</dbReference>
<dbReference type="RefSeq" id="WP_011247518.1">
    <property type="nucleotide sequence ID" value="NC_006582.1"/>
</dbReference>
<dbReference type="SMR" id="Q5WEK0"/>
<dbReference type="STRING" id="66692.ABC2675"/>
<dbReference type="KEGG" id="bcl:ABC2675"/>
<dbReference type="eggNOG" id="COG1193">
    <property type="taxonomic scope" value="Bacteria"/>
</dbReference>
<dbReference type="HOGENOM" id="CLU_011252_2_1_9"/>
<dbReference type="OrthoDB" id="9808166at2"/>
<dbReference type="Proteomes" id="UP000001168">
    <property type="component" value="Chromosome"/>
</dbReference>
<dbReference type="GO" id="GO:0005524">
    <property type="term" value="F:ATP binding"/>
    <property type="evidence" value="ECO:0007669"/>
    <property type="project" value="UniProtKB-UniRule"/>
</dbReference>
<dbReference type="GO" id="GO:0016887">
    <property type="term" value="F:ATP hydrolysis activity"/>
    <property type="evidence" value="ECO:0007669"/>
    <property type="project" value="InterPro"/>
</dbReference>
<dbReference type="GO" id="GO:0140664">
    <property type="term" value="F:ATP-dependent DNA damage sensor activity"/>
    <property type="evidence" value="ECO:0007669"/>
    <property type="project" value="InterPro"/>
</dbReference>
<dbReference type="GO" id="GO:0004519">
    <property type="term" value="F:endonuclease activity"/>
    <property type="evidence" value="ECO:0007669"/>
    <property type="project" value="UniProtKB-UniRule"/>
</dbReference>
<dbReference type="GO" id="GO:0030983">
    <property type="term" value="F:mismatched DNA binding"/>
    <property type="evidence" value="ECO:0007669"/>
    <property type="project" value="InterPro"/>
</dbReference>
<dbReference type="GO" id="GO:0043023">
    <property type="term" value="F:ribosomal large subunit binding"/>
    <property type="evidence" value="ECO:0007669"/>
    <property type="project" value="UniProtKB-UniRule"/>
</dbReference>
<dbReference type="GO" id="GO:0019843">
    <property type="term" value="F:rRNA binding"/>
    <property type="evidence" value="ECO:0007669"/>
    <property type="project" value="UniProtKB-UniRule"/>
</dbReference>
<dbReference type="GO" id="GO:0006298">
    <property type="term" value="P:mismatch repair"/>
    <property type="evidence" value="ECO:0007669"/>
    <property type="project" value="InterPro"/>
</dbReference>
<dbReference type="GO" id="GO:0045910">
    <property type="term" value="P:negative regulation of DNA recombination"/>
    <property type="evidence" value="ECO:0007669"/>
    <property type="project" value="InterPro"/>
</dbReference>
<dbReference type="GO" id="GO:0072344">
    <property type="term" value="P:rescue of stalled ribosome"/>
    <property type="evidence" value="ECO:0007669"/>
    <property type="project" value="UniProtKB-UniRule"/>
</dbReference>
<dbReference type="CDD" id="cd03280">
    <property type="entry name" value="ABC_MutS2"/>
    <property type="match status" value="1"/>
</dbReference>
<dbReference type="FunFam" id="3.40.50.300:FF:000830">
    <property type="entry name" value="Endonuclease MutS2"/>
    <property type="match status" value="1"/>
</dbReference>
<dbReference type="Gene3D" id="1.10.1420.10">
    <property type="match status" value="2"/>
</dbReference>
<dbReference type="Gene3D" id="3.30.1370.110">
    <property type="match status" value="1"/>
</dbReference>
<dbReference type="Gene3D" id="3.40.50.300">
    <property type="entry name" value="P-loop containing nucleotide triphosphate hydrolases"/>
    <property type="match status" value="1"/>
</dbReference>
<dbReference type="HAMAP" id="MF_00092">
    <property type="entry name" value="MutS2"/>
    <property type="match status" value="1"/>
</dbReference>
<dbReference type="InterPro" id="IPR000432">
    <property type="entry name" value="DNA_mismatch_repair_MutS_C"/>
</dbReference>
<dbReference type="InterPro" id="IPR007696">
    <property type="entry name" value="DNA_mismatch_repair_MutS_core"/>
</dbReference>
<dbReference type="InterPro" id="IPR036187">
    <property type="entry name" value="DNA_mismatch_repair_MutS_sf"/>
</dbReference>
<dbReference type="InterPro" id="IPR046893">
    <property type="entry name" value="MSSS"/>
</dbReference>
<dbReference type="InterPro" id="IPR045076">
    <property type="entry name" value="MutS"/>
</dbReference>
<dbReference type="InterPro" id="IPR005747">
    <property type="entry name" value="MutS2"/>
</dbReference>
<dbReference type="InterPro" id="IPR027417">
    <property type="entry name" value="P-loop_NTPase"/>
</dbReference>
<dbReference type="InterPro" id="IPR002625">
    <property type="entry name" value="Smr_dom"/>
</dbReference>
<dbReference type="InterPro" id="IPR036063">
    <property type="entry name" value="Smr_dom_sf"/>
</dbReference>
<dbReference type="NCBIfam" id="TIGR01069">
    <property type="entry name" value="mutS2"/>
    <property type="match status" value="1"/>
</dbReference>
<dbReference type="PANTHER" id="PTHR48466:SF2">
    <property type="entry name" value="OS10G0509000 PROTEIN"/>
    <property type="match status" value="1"/>
</dbReference>
<dbReference type="PANTHER" id="PTHR48466">
    <property type="entry name" value="OS10G0509000 PROTEIN-RELATED"/>
    <property type="match status" value="1"/>
</dbReference>
<dbReference type="Pfam" id="PF20297">
    <property type="entry name" value="MSSS"/>
    <property type="match status" value="1"/>
</dbReference>
<dbReference type="Pfam" id="PF00488">
    <property type="entry name" value="MutS_V"/>
    <property type="match status" value="1"/>
</dbReference>
<dbReference type="Pfam" id="PF01713">
    <property type="entry name" value="Smr"/>
    <property type="match status" value="1"/>
</dbReference>
<dbReference type="PIRSF" id="PIRSF005814">
    <property type="entry name" value="MutS_YshD"/>
    <property type="match status" value="1"/>
</dbReference>
<dbReference type="SMART" id="SM00534">
    <property type="entry name" value="MUTSac"/>
    <property type="match status" value="1"/>
</dbReference>
<dbReference type="SMART" id="SM00533">
    <property type="entry name" value="MUTSd"/>
    <property type="match status" value="1"/>
</dbReference>
<dbReference type="SMART" id="SM00463">
    <property type="entry name" value="SMR"/>
    <property type="match status" value="1"/>
</dbReference>
<dbReference type="SUPFAM" id="SSF48334">
    <property type="entry name" value="DNA repair protein MutS, domain III"/>
    <property type="match status" value="1"/>
</dbReference>
<dbReference type="SUPFAM" id="SSF52540">
    <property type="entry name" value="P-loop containing nucleoside triphosphate hydrolases"/>
    <property type="match status" value="1"/>
</dbReference>
<dbReference type="SUPFAM" id="SSF160443">
    <property type="entry name" value="SMR domain-like"/>
    <property type="match status" value="1"/>
</dbReference>
<dbReference type="PROSITE" id="PS00486">
    <property type="entry name" value="DNA_MISMATCH_REPAIR_2"/>
    <property type="match status" value="1"/>
</dbReference>
<dbReference type="PROSITE" id="PS50828">
    <property type="entry name" value="SMR"/>
    <property type="match status" value="1"/>
</dbReference>
<keyword id="KW-0067">ATP-binding</keyword>
<keyword id="KW-0238">DNA-binding</keyword>
<keyword id="KW-0255">Endonuclease</keyword>
<keyword id="KW-0378">Hydrolase</keyword>
<keyword id="KW-0540">Nuclease</keyword>
<keyword id="KW-0547">Nucleotide-binding</keyword>
<keyword id="KW-1185">Reference proteome</keyword>
<keyword id="KW-0694">RNA-binding</keyword>
<keyword id="KW-0699">rRNA-binding</keyword>